<dbReference type="EMBL" id="CP001191">
    <property type="protein sequence ID" value="ACI54348.1"/>
    <property type="molecule type" value="Genomic_DNA"/>
</dbReference>
<dbReference type="RefSeq" id="WP_003574183.1">
    <property type="nucleotide sequence ID" value="NC_011369.1"/>
</dbReference>
<dbReference type="SMR" id="B5ZWC9"/>
<dbReference type="STRING" id="395492.Rleg2_1054"/>
<dbReference type="KEGG" id="rlt:Rleg2_1054"/>
<dbReference type="eggNOG" id="COG0360">
    <property type="taxonomic scope" value="Bacteria"/>
</dbReference>
<dbReference type="HOGENOM" id="CLU_113441_2_0_5"/>
<dbReference type="Proteomes" id="UP000008330">
    <property type="component" value="Chromosome"/>
</dbReference>
<dbReference type="GO" id="GO:0022627">
    <property type="term" value="C:cytosolic small ribosomal subunit"/>
    <property type="evidence" value="ECO:0007669"/>
    <property type="project" value="TreeGrafter"/>
</dbReference>
<dbReference type="GO" id="GO:0070181">
    <property type="term" value="F:small ribosomal subunit rRNA binding"/>
    <property type="evidence" value="ECO:0007669"/>
    <property type="project" value="TreeGrafter"/>
</dbReference>
<dbReference type="GO" id="GO:0003735">
    <property type="term" value="F:structural constituent of ribosome"/>
    <property type="evidence" value="ECO:0007669"/>
    <property type="project" value="InterPro"/>
</dbReference>
<dbReference type="GO" id="GO:0006412">
    <property type="term" value="P:translation"/>
    <property type="evidence" value="ECO:0007669"/>
    <property type="project" value="UniProtKB-UniRule"/>
</dbReference>
<dbReference type="CDD" id="cd00473">
    <property type="entry name" value="bS6"/>
    <property type="match status" value="1"/>
</dbReference>
<dbReference type="Gene3D" id="3.30.70.60">
    <property type="match status" value="1"/>
</dbReference>
<dbReference type="HAMAP" id="MF_00360">
    <property type="entry name" value="Ribosomal_bS6"/>
    <property type="match status" value="1"/>
</dbReference>
<dbReference type="InterPro" id="IPR000529">
    <property type="entry name" value="Ribosomal_bS6"/>
</dbReference>
<dbReference type="InterPro" id="IPR035980">
    <property type="entry name" value="Ribosomal_bS6_sf"/>
</dbReference>
<dbReference type="InterPro" id="IPR020814">
    <property type="entry name" value="Ribosomal_S6_plastid/chlpt"/>
</dbReference>
<dbReference type="InterPro" id="IPR014717">
    <property type="entry name" value="Transl_elong_EF1B/ribsomal_bS6"/>
</dbReference>
<dbReference type="NCBIfam" id="TIGR00166">
    <property type="entry name" value="S6"/>
    <property type="match status" value="1"/>
</dbReference>
<dbReference type="PANTHER" id="PTHR21011">
    <property type="entry name" value="MITOCHONDRIAL 28S RIBOSOMAL PROTEIN S6"/>
    <property type="match status" value="1"/>
</dbReference>
<dbReference type="PANTHER" id="PTHR21011:SF1">
    <property type="entry name" value="SMALL RIBOSOMAL SUBUNIT PROTEIN BS6M"/>
    <property type="match status" value="1"/>
</dbReference>
<dbReference type="Pfam" id="PF01250">
    <property type="entry name" value="Ribosomal_S6"/>
    <property type="match status" value="1"/>
</dbReference>
<dbReference type="SUPFAM" id="SSF54995">
    <property type="entry name" value="Ribosomal protein S6"/>
    <property type="match status" value="1"/>
</dbReference>
<name>RS6_RHILW</name>
<evidence type="ECO:0000255" key="1">
    <source>
        <dbReference type="HAMAP-Rule" id="MF_00360"/>
    </source>
</evidence>
<evidence type="ECO:0000256" key="2">
    <source>
        <dbReference type="SAM" id="MobiDB-lite"/>
    </source>
</evidence>
<evidence type="ECO:0000305" key="3"/>
<organism>
    <name type="scientific">Rhizobium leguminosarum bv. trifolii (strain WSM2304)</name>
    <dbReference type="NCBI Taxonomy" id="395492"/>
    <lineage>
        <taxon>Bacteria</taxon>
        <taxon>Pseudomonadati</taxon>
        <taxon>Pseudomonadota</taxon>
        <taxon>Alphaproteobacteria</taxon>
        <taxon>Hyphomicrobiales</taxon>
        <taxon>Rhizobiaceae</taxon>
        <taxon>Rhizobium/Agrobacterium group</taxon>
        <taxon>Rhizobium</taxon>
    </lineage>
</organism>
<keyword id="KW-1185">Reference proteome</keyword>
<keyword id="KW-0687">Ribonucleoprotein</keyword>
<keyword id="KW-0689">Ribosomal protein</keyword>
<keyword id="KW-0694">RNA-binding</keyword>
<keyword id="KW-0699">rRNA-binding</keyword>
<comment type="function">
    <text evidence="1">Binds together with bS18 to 16S ribosomal RNA.</text>
</comment>
<comment type="similarity">
    <text evidence="1">Belongs to the bacterial ribosomal protein bS6 family.</text>
</comment>
<sequence>MALYEHVFLARQDISAQQVDALVEQYKGVIEANGGKVGRIENWGLKSLTYRIKKNRKAHYALMDIDAPAAAVQEMERQMRISEDVLRYMTIAVEKHEEGPSAMMQKRDRDDRPREGGRGPREGGFGDRDRGPRPPREGGFGDREDRPRRPREDRV</sequence>
<reference key="1">
    <citation type="journal article" date="2010" name="Stand. Genomic Sci.">
        <title>Complete genome sequence of Rhizobium leguminosarum bv trifolii strain WSM2304, an effective microsymbiont of the South American clover Trifolium polymorphum.</title>
        <authorList>
            <person name="Reeve W."/>
            <person name="O'Hara G."/>
            <person name="Chain P."/>
            <person name="Ardley J."/>
            <person name="Brau L."/>
            <person name="Nandesena K."/>
            <person name="Tiwari R."/>
            <person name="Malfatti S."/>
            <person name="Kiss H."/>
            <person name="Lapidus A."/>
            <person name="Copeland A."/>
            <person name="Nolan M."/>
            <person name="Land M."/>
            <person name="Ivanova N."/>
            <person name="Mavromatis K."/>
            <person name="Markowitz V."/>
            <person name="Kyrpides N."/>
            <person name="Melino V."/>
            <person name="Denton M."/>
            <person name="Yates R."/>
            <person name="Howieson J."/>
        </authorList>
    </citation>
    <scope>NUCLEOTIDE SEQUENCE [LARGE SCALE GENOMIC DNA]</scope>
    <source>
        <strain>WSM2304</strain>
    </source>
</reference>
<gene>
    <name evidence="1" type="primary">rpsF</name>
    <name type="ordered locus">Rleg2_1054</name>
</gene>
<feature type="chain" id="PRO_1000120793" description="Small ribosomal subunit protein bS6">
    <location>
        <begin position="1"/>
        <end position="155"/>
    </location>
</feature>
<feature type="region of interest" description="Disordered" evidence="2">
    <location>
        <begin position="94"/>
        <end position="155"/>
    </location>
</feature>
<proteinExistence type="inferred from homology"/>
<protein>
    <recommendedName>
        <fullName evidence="1">Small ribosomal subunit protein bS6</fullName>
    </recommendedName>
    <alternativeName>
        <fullName evidence="3">30S ribosomal protein S6</fullName>
    </alternativeName>
</protein>
<accession>B5ZWC9</accession>